<sequence length="21" mass="2085">AKPAKRVAVTGAAGQIAYSLL</sequence>
<gene>
    <name type="primary">mdh</name>
</gene>
<accession>P80538</accession>
<proteinExistence type="evidence at protein level"/>
<reference key="1">
    <citation type="journal article" date="1997" name="J. Bacteriol.">
        <title>Structural studies of malate dehydrogenases (MDHs): MDHs in Brevundimonas species are the first reported MDHs in Proteobacteria which resemble lactate dehydrogenases in primary structure.</title>
        <authorList>
            <person name="Charnock C."/>
        </authorList>
    </citation>
    <scope>PROTEIN SEQUENCE</scope>
    <source>
        <strain>ATCC 19706 / DSM 3303 / LMG 6867 / Ml</strain>
    </source>
</reference>
<dbReference type="EC" id="1.1.1.37"/>
<dbReference type="GO" id="GO:0030060">
    <property type="term" value="F:L-malate dehydrogenase (NAD+) activity"/>
    <property type="evidence" value="ECO:0007669"/>
    <property type="project" value="UniProtKB-EC"/>
</dbReference>
<dbReference type="GO" id="GO:0006099">
    <property type="term" value="P:tricarboxylic acid cycle"/>
    <property type="evidence" value="ECO:0007669"/>
    <property type="project" value="UniProtKB-KW"/>
</dbReference>
<keyword id="KW-0903">Direct protein sequencing</keyword>
<keyword id="KW-0520">NAD</keyword>
<keyword id="KW-0560">Oxidoreductase</keyword>
<keyword id="KW-0816">Tricarboxylic acid cycle</keyword>
<protein>
    <recommendedName>
        <fullName>Malate dehydrogenase</fullName>
        <ecNumber>1.1.1.37</ecNumber>
    </recommendedName>
</protein>
<organism>
    <name type="scientific">Vogesella indigofera</name>
    <name type="common">Pseudomonas indigofera</name>
    <dbReference type="NCBI Taxonomy" id="45465"/>
    <lineage>
        <taxon>Bacteria</taxon>
        <taxon>Pseudomonadati</taxon>
        <taxon>Pseudomonadota</taxon>
        <taxon>Betaproteobacteria</taxon>
        <taxon>Neisseriales</taxon>
        <taxon>Chromobacteriaceae</taxon>
        <taxon>Vogesella</taxon>
    </lineage>
</organism>
<name>MDH_VOGIN</name>
<feature type="chain" id="PRO_0000113388" description="Malate dehydrogenase">
    <location>
        <begin position="1"/>
        <end position="21" status="greater than"/>
    </location>
</feature>
<feature type="binding site" evidence="1">
    <location>
        <begin position="11"/>
        <end position="17"/>
    </location>
    <ligand>
        <name>NAD(+)</name>
        <dbReference type="ChEBI" id="CHEBI:57540"/>
    </ligand>
</feature>
<feature type="non-terminal residue">
    <location>
        <position position="21"/>
    </location>
</feature>
<evidence type="ECO:0000250" key="1"/>
<evidence type="ECO:0000255" key="2">
    <source>
        <dbReference type="PROSITE-ProRule" id="PRU10004"/>
    </source>
</evidence>
<evidence type="ECO:0000305" key="3"/>
<comment type="function">
    <text evidence="1">Catalyzes the reversible oxidation of malate to oxaloacetate.</text>
</comment>
<comment type="catalytic activity">
    <reaction evidence="2">
        <text>(S)-malate + NAD(+) = oxaloacetate + NADH + H(+)</text>
        <dbReference type="Rhea" id="RHEA:21432"/>
        <dbReference type="ChEBI" id="CHEBI:15378"/>
        <dbReference type="ChEBI" id="CHEBI:15589"/>
        <dbReference type="ChEBI" id="CHEBI:16452"/>
        <dbReference type="ChEBI" id="CHEBI:57540"/>
        <dbReference type="ChEBI" id="CHEBI:57945"/>
        <dbReference type="EC" id="1.1.1.37"/>
    </reaction>
</comment>
<comment type="similarity">
    <text evidence="3">Belongs to the LDH/MDH superfamily. MDH type 2 family.</text>
</comment>